<organism>
    <name type="scientific">Lactococcus lactis subsp. lactis (strain IL1403)</name>
    <name type="common">Streptococcus lactis</name>
    <dbReference type="NCBI Taxonomy" id="272623"/>
    <lineage>
        <taxon>Bacteria</taxon>
        <taxon>Bacillati</taxon>
        <taxon>Bacillota</taxon>
        <taxon>Bacilli</taxon>
        <taxon>Lactobacillales</taxon>
        <taxon>Streptococcaceae</taxon>
        <taxon>Lactococcus</taxon>
    </lineage>
</organism>
<keyword id="KW-0963">Cytoplasm</keyword>
<keyword id="KW-0350">Heme biosynthesis</keyword>
<keyword id="KW-0408">Iron</keyword>
<keyword id="KW-0456">Lyase</keyword>
<keyword id="KW-0479">Metal-binding</keyword>
<keyword id="KW-0627">Porphyrin biosynthesis</keyword>
<keyword id="KW-1185">Reference proteome</keyword>
<protein>
    <recommendedName>
        <fullName evidence="1">Coproporphyrin III ferrochelatase</fullName>
        <ecNumber evidence="1">4.99.1.9</ecNumber>
    </recommendedName>
</protein>
<accession>Q9CFB4</accession>
<sequence>MDKKKGILLVALGTPRSCEADDVRDYLKEFLGDPLVIQKPRWLWLPILNGIILKVRPQKSAEMYKKIWTDEGSPLMIYTVAQAKQLQDMREDFDVRFAMTYGEPRIDKVIAEMKESGVEEITVLPLYPQYSLTTVEPVIQQVKKIDDKIKVIRDFHKVESYSDLLAESIREKWQANDYDKLVLSYHGIPLSYVTKKKDAYEEQCKETTRLVVSKLGLREEEYEHTYQSKFGPEKWLEPATIDRVAELPKENAKKVLICSPAFVADCLETLFELEIENKEVFVENGGETFDFVHPFNDSLDFTRVLSEVVDQNRL</sequence>
<comment type="function">
    <text evidence="1">Involved in coproporphyrin-dependent heme b biosynthesis. Catalyzes the insertion of ferrous iron into coproporphyrin III to form Fe-coproporphyrin III.</text>
</comment>
<comment type="catalytic activity">
    <reaction evidence="1">
        <text>Fe-coproporphyrin III + 2 H(+) = coproporphyrin III + Fe(2+)</text>
        <dbReference type="Rhea" id="RHEA:49572"/>
        <dbReference type="ChEBI" id="CHEBI:15378"/>
        <dbReference type="ChEBI" id="CHEBI:29033"/>
        <dbReference type="ChEBI" id="CHEBI:68438"/>
        <dbReference type="ChEBI" id="CHEBI:131725"/>
        <dbReference type="EC" id="4.99.1.9"/>
    </reaction>
    <physiologicalReaction direction="right-to-left" evidence="1">
        <dbReference type="Rhea" id="RHEA:49574"/>
    </physiologicalReaction>
</comment>
<comment type="pathway">
    <text evidence="1">Porphyrin-containing compound metabolism; protoheme biosynthesis.</text>
</comment>
<comment type="subcellular location">
    <subcellularLocation>
        <location evidence="1">Cytoplasm</location>
    </subcellularLocation>
</comment>
<comment type="similarity">
    <text evidence="1 2">Belongs to the ferrochelatase family.</text>
</comment>
<evidence type="ECO:0000255" key="1">
    <source>
        <dbReference type="HAMAP-Rule" id="MF_00323"/>
    </source>
</evidence>
<evidence type="ECO:0000305" key="2"/>
<reference key="1">
    <citation type="journal article" date="2001" name="Genome Res.">
        <title>The complete genome sequence of the lactic acid bacterium Lactococcus lactis ssp. lactis IL1403.</title>
        <authorList>
            <person name="Bolotin A."/>
            <person name="Wincker P."/>
            <person name="Mauger S."/>
            <person name="Jaillon O."/>
            <person name="Malarme K."/>
            <person name="Weissenbach J."/>
            <person name="Ehrlich S.D."/>
            <person name="Sorokin A."/>
        </authorList>
    </citation>
    <scope>NUCLEOTIDE SEQUENCE [LARGE SCALE GENOMIC DNA]</scope>
    <source>
        <strain>IL1403</strain>
    </source>
</reference>
<dbReference type="EC" id="4.99.1.9" evidence="1"/>
<dbReference type="EMBL" id="AE005176">
    <property type="protein sequence ID" value="AAK05665.1"/>
    <property type="molecule type" value="Genomic_DNA"/>
</dbReference>
<dbReference type="PIR" id="G86820">
    <property type="entry name" value="G86820"/>
</dbReference>
<dbReference type="RefSeq" id="NP_267723.1">
    <property type="nucleotide sequence ID" value="NC_002662.1"/>
</dbReference>
<dbReference type="RefSeq" id="WP_003130709.1">
    <property type="nucleotide sequence ID" value="NC_002662.1"/>
</dbReference>
<dbReference type="SMR" id="Q9CFB4"/>
<dbReference type="PaxDb" id="272623-L0194"/>
<dbReference type="EnsemblBacteria" id="AAK05665">
    <property type="protein sequence ID" value="AAK05665"/>
    <property type="gene ID" value="L0194"/>
</dbReference>
<dbReference type="GeneID" id="89633767"/>
<dbReference type="KEGG" id="lla:L0194"/>
<dbReference type="PATRIC" id="fig|272623.7.peg.1685"/>
<dbReference type="eggNOG" id="COG0276">
    <property type="taxonomic scope" value="Bacteria"/>
</dbReference>
<dbReference type="HOGENOM" id="CLU_018884_0_0_9"/>
<dbReference type="OrthoDB" id="9809741at2"/>
<dbReference type="UniPathway" id="UPA00252"/>
<dbReference type="Proteomes" id="UP000002196">
    <property type="component" value="Chromosome"/>
</dbReference>
<dbReference type="GO" id="GO:0005737">
    <property type="term" value="C:cytoplasm"/>
    <property type="evidence" value="ECO:0007669"/>
    <property type="project" value="UniProtKB-SubCell"/>
</dbReference>
<dbReference type="GO" id="GO:0004325">
    <property type="term" value="F:ferrochelatase activity"/>
    <property type="evidence" value="ECO:0007669"/>
    <property type="project" value="UniProtKB-UniRule"/>
</dbReference>
<dbReference type="GO" id="GO:0046872">
    <property type="term" value="F:metal ion binding"/>
    <property type="evidence" value="ECO:0007669"/>
    <property type="project" value="UniProtKB-KW"/>
</dbReference>
<dbReference type="GO" id="GO:0006783">
    <property type="term" value="P:heme biosynthetic process"/>
    <property type="evidence" value="ECO:0007669"/>
    <property type="project" value="UniProtKB-UniRule"/>
</dbReference>
<dbReference type="CDD" id="cd00419">
    <property type="entry name" value="Ferrochelatase_C"/>
    <property type="match status" value="1"/>
</dbReference>
<dbReference type="CDD" id="cd03411">
    <property type="entry name" value="Ferrochelatase_N"/>
    <property type="match status" value="1"/>
</dbReference>
<dbReference type="FunFam" id="3.40.50.1400:FF:000002">
    <property type="entry name" value="Ferrochelatase"/>
    <property type="match status" value="1"/>
</dbReference>
<dbReference type="Gene3D" id="3.40.50.1400">
    <property type="match status" value="2"/>
</dbReference>
<dbReference type="HAMAP" id="MF_00323">
    <property type="entry name" value="Ferrochelatase"/>
    <property type="match status" value="1"/>
</dbReference>
<dbReference type="InterPro" id="IPR001015">
    <property type="entry name" value="Ferrochelatase"/>
</dbReference>
<dbReference type="InterPro" id="IPR033644">
    <property type="entry name" value="Ferrochelatase_C"/>
</dbReference>
<dbReference type="InterPro" id="IPR033659">
    <property type="entry name" value="Ferrochelatase_N"/>
</dbReference>
<dbReference type="NCBIfam" id="TIGR00109">
    <property type="entry name" value="hemH"/>
    <property type="match status" value="1"/>
</dbReference>
<dbReference type="PANTHER" id="PTHR11108">
    <property type="entry name" value="FERROCHELATASE"/>
    <property type="match status" value="1"/>
</dbReference>
<dbReference type="PANTHER" id="PTHR11108:SF1">
    <property type="entry name" value="FERROCHELATASE, MITOCHONDRIAL"/>
    <property type="match status" value="1"/>
</dbReference>
<dbReference type="Pfam" id="PF00762">
    <property type="entry name" value="Ferrochelatase"/>
    <property type="match status" value="1"/>
</dbReference>
<dbReference type="SUPFAM" id="SSF53800">
    <property type="entry name" value="Chelatase"/>
    <property type="match status" value="1"/>
</dbReference>
<proteinExistence type="inferred from homology"/>
<gene>
    <name evidence="1" type="primary">cpfC</name>
    <name type="synonym">hemH</name>
    <name type="ordered locus">LL1567</name>
    <name type="ORF">L0194</name>
</gene>
<name>CPFC_LACLA</name>
<feature type="chain" id="PRO_0000175152" description="Coproporphyrin III ferrochelatase">
    <location>
        <begin position="1"/>
        <end position="314"/>
    </location>
</feature>
<feature type="binding site" evidence="1">
    <location>
        <position position="186"/>
    </location>
    <ligand>
        <name>Fe(2+)</name>
        <dbReference type="ChEBI" id="CHEBI:29033"/>
    </ligand>
</feature>
<feature type="binding site" evidence="1">
    <location>
        <position position="268"/>
    </location>
    <ligand>
        <name>Fe(2+)</name>
        <dbReference type="ChEBI" id="CHEBI:29033"/>
    </ligand>
</feature>